<comment type="function">
    <text evidence="9">May have a structural role to stabilize the lipid body during desiccation of the seed by preventing coalescence of the oil. Probably interacts with both lipid and phospholipid moieties of lipid bodies. May also provide recognition signals for specific lipase anchorage in lipolysis during seedling growth.</text>
</comment>
<comment type="subcellular location">
    <subcellularLocation>
        <location evidence="3 5 6">Lipid droplet</location>
    </subcellularLocation>
    <subcellularLocation>
        <location evidence="3">Membrane</location>
        <topology evidence="3">Multi-pass membrane protein</topology>
    </subcellularLocation>
    <text evidence="9">Surface of oil bodies. Oleosins exist at a monolayer lipid/water interface.</text>
</comment>
<comment type="tissue specificity">
    <text evidence="5 6">Expressed in seeds (at protein level).</text>
</comment>
<comment type="developmental stage">
    <text evidence="5">Expressed during seed maturation. Expressed in maturing seeds about 1 and half weeks after flowering. Expression continues steadily thereafter until it decreases in the seed-drying stage, reaching undetectable levels in mature seeds.</text>
</comment>
<comment type="domain">
    <text evidence="9">The proline-knot motif may be involved in the targeting to oil bodies.</text>
</comment>
<comment type="allergen">
    <text evidence="6">Causes an allergic reaction in human. Binds to IgE in all of the 32 patients tested allergic to sesame seeds.</text>
</comment>
<comment type="similarity">
    <text evidence="3">Belongs to the oleosin family.</text>
</comment>
<protein>
    <recommendedName>
        <fullName evidence="7">Oleosin L</fullName>
    </recommendedName>
    <alternativeName>
        <fullName evidence="8">Allergen Ses i 5</fullName>
    </alternativeName>
    <alternativeName>
        <fullName evidence="7 8">Oleosin 15 kDa</fullName>
    </alternativeName>
    <allergenName evidence="9">Ses i 5.0101</allergenName>
</protein>
<evidence type="ECO:0000250" key="1">
    <source>
        <dbReference type="UniProtKB" id="C3S7F0"/>
    </source>
</evidence>
<evidence type="ECO:0000255" key="2"/>
<evidence type="ECO:0000255" key="3">
    <source>
        <dbReference type="RuleBase" id="RU000540"/>
    </source>
</evidence>
<evidence type="ECO:0000256" key="4">
    <source>
        <dbReference type="SAM" id="MobiDB-lite"/>
    </source>
</evidence>
<evidence type="ECO:0000269" key="5">
    <source>
    </source>
</evidence>
<evidence type="ECO:0000269" key="6">
    <source>
    </source>
</evidence>
<evidence type="ECO:0000303" key="7">
    <source>
    </source>
</evidence>
<evidence type="ECO:0000303" key="8">
    <source>
    </source>
</evidence>
<evidence type="ECO:0000305" key="9"/>
<evidence type="ECO:0000305" key="10">
    <source>
    </source>
</evidence>
<evidence type="ECO:0000312" key="11">
    <source>
        <dbReference type="EMBL" id="AAD42942.1"/>
    </source>
</evidence>
<evidence type="ECO:0000312" key="12">
    <source>
        <dbReference type="EMBL" id="ACH85187.1"/>
    </source>
</evidence>
<name>OLEL_SESIN</name>
<keyword id="KW-0007">Acetylation</keyword>
<keyword id="KW-0020">Allergen</keyword>
<keyword id="KW-0551">Lipid droplet</keyword>
<keyword id="KW-0472">Membrane</keyword>
<keyword id="KW-1185">Reference proteome</keyword>
<keyword id="KW-0812">Transmembrane</keyword>
<keyword id="KW-1133">Transmembrane helix</keyword>
<organism evidence="11">
    <name type="scientific">Sesamum indicum</name>
    <name type="common">Oriental sesame</name>
    <name type="synonym">Sesamum orientale</name>
    <dbReference type="NCBI Taxonomy" id="4182"/>
    <lineage>
        <taxon>Eukaryota</taxon>
        <taxon>Viridiplantae</taxon>
        <taxon>Streptophyta</taxon>
        <taxon>Embryophyta</taxon>
        <taxon>Tracheophyta</taxon>
        <taxon>Spermatophyta</taxon>
        <taxon>Magnoliopsida</taxon>
        <taxon>eudicotyledons</taxon>
        <taxon>Gunneridae</taxon>
        <taxon>Pentapetalae</taxon>
        <taxon>asterids</taxon>
        <taxon>lamiids</taxon>
        <taxon>Lamiales</taxon>
        <taxon>Pedaliaceae</taxon>
        <taxon>Sesamum</taxon>
    </lineage>
</organism>
<dbReference type="EMBL" id="AF091840">
    <property type="protein sequence ID" value="AAD42942.1"/>
    <property type="molecule type" value="mRNA"/>
</dbReference>
<dbReference type="EMBL" id="EU999158">
    <property type="protein sequence ID" value="ACH85187.1"/>
    <property type="molecule type" value="mRNA"/>
</dbReference>
<dbReference type="FunCoup" id="Q9XHP2">
    <property type="interactions" value="218"/>
</dbReference>
<dbReference type="Allergome" id="1441">
    <property type="allergen name" value="Ses i 5"/>
</dbReference>
<dbReference type="Allergome" id="3475">
    <property type="allergen name" value="Ses i 5.0101"/>
</dbReference>
<dbReference type="InParanoid" id="Q9XHP2"/>
<dbReference type="Proteomes" id="UP000504604">
    <property type="component" value="Unplaced"/>
</dbReference>
<dbReference type="GO" id="GO:0005576">
    <property type="term" value="C:extracellular region"/>
    <property type="evidence" value="ECO:0007669"/>
    <property type="project" value="TreeGrafter"/>
</dbReference>
<dbReference type="GO" id="GO:0016020">
    <property type="term" value="C:membrane"/>
    <property type="evidence" value="ECO:0007669"/>
    <property type="project" value="UniProtKB-SubCell"/>
</dbReference>
<dbReference type="GO" id="GO:0012511">
    <property type="term" value="C:monolayer-surrounded lipid storage body"/>
    <property type="evidence" value="ECO:0000314"/>
    <property type="project" value="UniProtKB"/>
</dbReference>
<dbReference type="GO" id="GO:0034389">
    <property type="term" value="P:lipid droplet organization"/>
    <property type="evidence" value="ECO:0000305"/>
    <property type="project" value="UniProtKB"/>
</dbReference>
<dbReference type="GO" id="GO:0019915">
    <property type="term" value="P:lipid storage"/>
    <property type="evidence" value="ECO:0000305"/>
    <property type="project" value="UniProtKB"/>
</dbReference>
<dbReference type="GO" id="GO:0010431">
    <property type="term" value="P:seed maturation"/>
    <property type="evidence" value="ECO:0000270"/>
    <property type="project" value="UniProtKB"/>
</dbReference>
<dbReference type="GO" id="GO:0019953">
    <property type="term" value="P:sexual reproduction"/>
    <property type="evidence" value="ECO:0007669"/>
    <property type="project" value="TreeGrafter"/>
</dbReference>
<dbReference type="InterPro" id="IPR000136">
    <property type="entry name" value="Oleosin"/>
</dbReference>
<dbReference type="PANTHER" id="PTHR33203">
    <property type="entry name" value="OLEOSIN"/>
    <property type="match status" value="1"/>
</dbReference>
<dbReference type="PANTHER" id="PTHR33203:SF25">
    <property type="entry name" value="OLEOSIN 18.5 KDA"/>
    <property type="match status" value="1"/>
</dbReference>
<dbReference type="Pfam" id="PF01277">
    <property type="entry name" value="Oleosin"/>
    <property type="match status" value="1"/>
</dbReference>
<dbReference type="PROSITE" id="PS00811">
    <property type="entry name" value="OLEOSINS"/>
    <property type="match status" value="1"/>
</dbReference>
<sequence length="145" mass="15194">MAEHYGQQQQTRAPHLQLQPRAQRVVKAATAVTAGGSLLVLSGLTLAGTVIALTIATPLLVIFSPVLVPAVITIFLLGAGFLASGGFGVAALSVLSWIYRYLTGKHPPGADQLESAKTKLASKAREMKDRAEQFSQQPVAGSQTS</sequence>
<reference evidence="11" key="1">
    <citation type="journal article" date="2002" name="Biosci. Biotechnol. Biochem.">
        <title>Gene family of oleosin isoforms and their structural stabilization in sesame seed oil bodies.</title>
        <authorList>
            <person name="Tai S.S."/>
            <person name="Chen M.C."/>
            <person name="Peng C.C."/>
            <person name="Tzen J.T."/>
        </authorList>
    </citation>
    <scope>NUCLEOTIDE SEQUENCE [MRNA]</scope>
    <scope>SUBCELLULAR LOCATION</scope>
    <scope>TISSUE SPECIFICITY</scope>
    <scope>DEVELOPMENTAL STAGE</scope>
    <source>
        <strain evidence="11">cv. Tainan 1</strain>
        <tissue evidence="7">Seed</tissue>
    </source>
</reference>
<reference evidence="12" key="2">
    <citation type="submission" date="2008-08" db="EMBL/GenBank/DDBJ databases">
        <title>Molecular cloning, expression and identification of the main allergen 15 kda oleosin in white sesame.</title>
        <authorList>
            <person name="He F."/>
            <person name="Wu Y."/>
            <person name="Liu Z."/>
        </authorList>
    </citation>
    <scope>NUCLEOTIDE SEQUENCE [MRNA]</scope>
</reference>
<reference key="3">
    <citation type="journal article" date="2006" name="Allergy">
        <title>Identification of oleosins as major allergens in sesame seed allergic patients.</title>
        <authorList>
            <person name="Leduc V."/>
            <person name="Moneret-Vautrin D.A."/>
            <person name="Tzen J.T."/>
            <person name="Morisset M."/>
            <person name="Guerin L."/>
            <person name="Kanny G."/>
        </authorList>
    </citation>
    <scope>SUBCELLULAR LOCATION</scope>
    <scope>TISSUE SPECIFICITY</scope>
    <scope>ALLERGEN</scope>
</reference>
<proteinExistence type="evidence at protein level"/>
<accession>Q9XHP2</accession>
<feature type="initiator methionine" description="Removed" evidence="1">
    <location>
        <position position="1"/>
    </location>
</feature>
<feature type="chain" id="PRO_0000449966" description="Oleosin L">
    <location>
        <begin position="2"/>
        <end position="145"/>
    </location>
</feature>
<feature type="transmembrane region" description="Helical" evidence="2">
    <location>
        <begin position="36"/>
        <end position="56"/>
    </location>
</feature>
<feature type="transmembrane region" description="Helical" evidence="2">
    <location>
        <begin position="59"/>
        <end position="79"/>
    </location>
</feature>
<feature type="region of interest" description="Disordered" evidence="4">
    <location>
        <begin position="123"/>
        <end position="145"/>
    </location>
</feature>
<feature type="short sequence motif" description="Proline-knot" evidence="10">
    <location>
        <begin position="58"/>
        <end position="69"/>
    </location>
</feature>
<feature type="compositionally biased region" description="Basic and acidic residues" evidence="4">
    <location>
        <begin position="123"/>
        <end position="132"/>
    </location>
</feature>
<feature type="compositionally biased region" description="Polar residues" evidence="4">
    <location>
        <begin position="133"/>
        <end position="145"/>
    </location>
</feature>
<feature type="modified residue" description="N-acetylalanine" evidence="1">
    <location>
        <position position="2"/>
    </location>
</feature>